<gene>
    <name type="primary">PER73</name>
    <name type="synonym">P73</name>
    <name type="ordered locus">At5g67400</name>
    <name type="ORF">K8K14.13</name>
</gene>
<reference key="1">
    <citation type="online journal article" date="1996" name="Plant Gene Register">
        <title>Eleven cDNA clones from Arabidopsis thaliana encoding isoperoxidases.</title>
        <authorList>
            <person name="Capelli N."/>
            <person name="Tognolli M."/>
            <person name="Flach J."/>
            <person name="Overney S."/>
            <person name="Penel C."/>
            <person name="Greppin H."/>
            <person name="Simon P."/>
        </authorList>
        <locator>PGR96-066</locator>
    </citation>
    <scope>NUCLEOTIDE SEQUENCE [MRNA]</scope>
    <source>
        <strain>cv. Columbia</strain>
        <tissue>Flower</tissue>
        <tissue>Leaf</tissue>
        <tissue>Root</tissue>
        <tissue>Silique</tissue>
        <tissue>Stem</tissue>
    </source>
</reference>
<reference key="2">
    <citation type="submission" date="1996-07" db="EMBL/GenBank/DDBJ databases">
        <title>From expressed sequence tags to structure, function, evolution and expression of 28 ER-targeted Arabidopsis peroxidases.</title>
        <authorList>
            <person name="Welinder K.G."/>
            <person name="Jespersen H.M."/>
            <person name="Kjaersgaard I.V.H."/>
            <person name="Justesen A.F."/>
            <person name="Oestergaard L."/>
            <person name="Abelskov A.K."/>
            <person name="Jensen R.B."/>
            <person name="Hansen L.N."/>
            <person name="Rasmussen S.K."/>
        </authorList>
    </citation>
    <scope>NUCLEOTIDE SEQUENCE [MRNA]</scope>
    <source>
        <strain>cv. Columbia</strain>
    </source>
</reference>
<reference key="3">
    <citation type="journal article" date="1997" name="DNA Res.">
        <title>Structural analysis of Arabidopsis thaliana chromosome 5. III. Sequence features of the regions of 1,191,918 bp covered by seventeen physically assigned P1 clones.</title>
        <authorList>
            <person name="Nakamura Y."/>
            <person name="Sato S."/>
            <person name="Kaneko T."/>
            <person name="Kotani H."/>
            <person name="Asamizu E."/>
            <person name="Miyajima N."/>
            <person name="Tabata S."/>
        </authorList>
    </citation>
    <scope>NUCLEOTIDE SEQUENCE [LARGE SCALE GENOMIC DNA]</scope>
    <source>
        <strain>cv. Columbia</strain>
    </source>
</reference>
<reference key="4">
    <citation type="journal article" date="2017" name="Plant J.">
        <title>Araport11: a complete reannotation of the Arabidopsis thaliana reference genome.</title>
        <authorList>
            <person name="Cheng C.Y."/>
            <person name="Krishnakumar V."/>
            <person name="Chan A.P."/>
            <person name="Thibaud-Nissen F."/>
            <person name="Schobel S."/>
            <person name="Town C.D."/>
        </authorList>
    </citation>
    <scope>GENOME REANNOTATION</scope>
    <source>
        <strain>cv. Columbia</strain>
    </source>
</reference>
<reference key="5">
    <citation type="journal article" date="1998" name="FEBS Lett.">
        <title>Computational analyses and annotations of the Arabidopsis peroxidase gene family.</title>
        <authorList>
            <person name="Oestergaard L."/>
            <person name="Pedersen A.G."/>
            <person name="Jespersen H.M."/>
            <person name="Brunak S."/>
            <person name="Welinder K.G."/>
        </authorList>
    </citation>
    <scope>CHARACTERIZATION</scope>
    <source>
        <strain>cv. Columbia</strain>
    </source>
</reference>
<reference key="6">
    <citation type="journal article" date="2002" name="Plant Cell">
        <title>Arabidopsis transcriptome profiling indicates that multiple regulatory pathways are activated during cold acclimation in addition to the CBF cold response pathway.</title>
        <authorList>
            <person name="Fowler S."/>
            <person name="Thomashow M.F."/>
        </authorList>
    </citation>
    <scope>INDUCTION</scope>
    <source>
        <strain>cv. Columbia</strain>
    </source>
</reference>
<reference key="7">
    <citation type="journal article" date="2002" name="Gene">
        <title>Analysis and expression of the class III peroxidase large gene family in Arabidopsis thaliana.</title>
        <authorList>
            <person name="Tognolli M."/>
            <person name="Penel C."/>
            <person name="Greppin H."/>
            <person name="Simon P."/>
        </authorList>
    </citation>
    <scope>GENE FAMILY ORGANIZATION</scope>
    <scope>NOMENCLATURE</scope>
    <source>
        <strain>cv. Columbia</strain>
    </source>
</reference>
<comment type="function">
    <text>Removal of H(2)O(2), oxidation of toxic reductants, biosynthesis and degradation of lignin, suberization, auxin catabolism, response to environmental stresses such as wounding, pathogen attack and oxidative stress. These functions might be dependent on each isozyme/isoform in each plant tissue.</text>
</comment>
<comment type="catalytic activity">
    <reaction>
        <text>2 a phenolic donor + H2O2 = 2 a phenolic radical donor + 2 H2O</text>
        <dbReference type="Rhea" id="RHEA:56136"/>
        <dbReference type="ChEBI" id="CHEBI:15377"/>
        <dbReference type="ChEBI" id="CHEBI:16240"/>
        <dbReference type="ChEBI" id="CHEBI:139520"/>
        <dbReference type="ChEBI" id="CHEBI:139521"/>
        <dbReference type="EC" id="1.11.1.7"/>
    </reaction>
</comment>
<comment type="cofactor">
    <cofactor evidence="2">
        <name>heme b</name>
        <dbReference type="ChEBI" id="CHEBI:60344"/>
    </cofactor>
    <text evidence="2">Binds 1 heme b (iron(II)-protoporphyrin IX) group per subunit.</text>
</comment>
<comment type="cofactor">
    <cofactor evidence="2">
        <name>Ca(2+)</name>
        <dbReference type="ChEBI" id="CHEBI:29108"/>
    </cofactor>
    <text evidence="2">Binds 2 calcium ions per subunit.</text>
</comment>
<comment type="subcellular location">
    <subcellularLocation>
        <location evidence="2">Secreted</location>
    </subcellularLocation>
</comment>
<comment type="tissue specificity">
    <text>Expressed in the whole plant, with the highest expression in roots.</text>
</comment>
<comment type="induction">
    <text evidence="3">Up-regulated transiently by a cold treatment.</text>
</comment>
<comment type="miscellaneous">
    <text>There are 73 peroxidase genes in A.thaliana.</text>
</comment>
<comment type="similarity">
    <text evidence="2">Belongs to the peroxidase family. Classical plant (class III) peroxidase subfamily.</text>
</comment>
<organism>
    <name type="scientific">Arabidopsis thaliana</name>
    <name type="common">Mouse-ear cress</name>
    <dbReference type="NCBI Taxonomy" id="3702"/>
    <lineage>
        <taxon>Eukaryota</taxon>
        <taxon>Viridiplantae</taxon>
        <taxon>Streptophyta</taxon>
        <taxon>Embryophyta</taxon>
        <taxon>Tracheophyta</taxon>
        <taxon>Spermatophyta</taxon>
        <taxon>Magnoliopsida</taxon>
        <taxon>eudicotyledons</taxon>
        <taxon>Gunneridae</taxon>
        <taxon>Pentapetalae</taxon>
        <taxon>rosids</taxon>
        <taxon>malvids</taxon>
        <taxon>Brassicales</taxon>
        <taxon>Brassicaceae</taxon>
        <taxon>Camelineae</taxon>
        <taxon>Arabidopsis</taxon>
    </lineage>
</organism>
<accession>Q43873</accession>
<sequence>MARFSLVVVVTLSLAISMFPDTTTAQLKTNFYGNSCPNVEQIVKKVVQEKIKQTFVTIPATLRLFFHDCFVNGCDASVMIQSTPTNKAEKDHPDNISLAGDGFDVVIKAKKALDAIPSCKNKVSCADILALATRDVVVAAKGPSYAVELGRFDGLVSTAASVNGNLPGPNNKVTELNKLFAKNKLTQEDMIALSAAHTLGFAHCGKVFNRIYNFNLTHAVDPTLNKAYAKELQLACPKTVDPRIAINMDPTTPRQFDNIYFKNLQQGKGLFTSDQVLFTDGRSKPTVNDWAKNSVAFNKAFVTAMTKLGRVGVKTRRNGNIRRDCGAFN</sequence>
<name>PER73_ARATH</name>
<dbReference type="EC" id="1.11.1.7"/>
<dbReference type="EMBL" id="X98323">
    <property type="protein sequence ID" value="CAA66967.1"/>
    <property type="molecule type" value="mRNA"/>
</dbReference>
<dbReference type="EMBL" id="X98928">
    <property type="protein sequence ID" value="CAA67428.1"/>
    <property type="molecule type" value="mRNA"/>
</dbReference>
<dbReference type="EMBL" id="AB007645">
    <property type="protein sequence ID" value="BAB09025.1"/>
    <property type="molecule type" value="Genomic_DNA"/>
</dbReference>
<dbReference type="EMBL" id="CP002688">
    <property type="protein sequence ID" value="AED98339.1"/>
    <property type="molecule type" value="Genomic_DNA"/>
</dbReference>
<dbReference type="RefSeq" id="NP_201541.1">
    <property type="nucleotide sequence ID" value="NM_126140.3"/>
</dbReference>
<dbReference type="SMR" id="Q43873"/>
<dbReference type="FunCoup" id="Q43873">
    <property type="interactions" value="143"/>
</dbReference>
<dbReference type="STRING" id="3702.Q43873"/>
<dbReference type="PeroxiBase" id="239">
    <property type="entry name" value="AtPrx73"/>
</dbReference>
<dbReference type="GlyCosmos" id="Q43873">
    <property type="glycosylation" value="1 site, No reported glycans"/>
</dbReference>
<dbReference type="GlyGen" id="Q43873">
    <property type="glycosylation" value="1 site"/>
</dbReference>
<dbReference type="iPTMnet" id="Q43873"/>
<dbReference type="PaxDb" id="3702-AT5G67400.1"/>
<dbReference type="ProteomicsDB" id="236774"/>
<dbReference type="EnsemblPlants" id="AT5G67400.1">
    <property type="protein sequence ID" value="AT5G67400.1"/>
    <property type="gene ID" value="AT5G67400"/>
</dbReference>
<dbReference type="GeneID" id="836876"/>
<dbReference type="Gramene" id="AT5G67400.1">
    <property type="protein sequence ID" value="AT5G67400.1"/>
    <property type="gene ID" value="AT5G67400"/>
</dbReference>
<dbReference type="KEGG" id="ath:AT5G67400"/>
<dbReference type="Araport" id="AT5G67400"/>
<dbReference type="TAIR" id="AT5G67400">
    <property type="gene designation" value="RHS19"/>
</dbReference>
<dbReference type="eggNOG" id="ENOG502QV9M">
    <property type="taxonomic scope" value="Eukaryota"/>
</dbReference>
<dbReference type="HOGENOM" id="CLU_010543_0_3_1"/>
<dbReference type="InParanoid" id="Q43873"/>
<dbReference type="OMA" id="KTRRNGN"/>
<dbReference type="PhylomeDB" id="Q43873"/>
<dbReference type="BioCyc" id="ARA:AT5G67400-MONOMER"/>
<dbReference type="PRO" id="PR:Q43873"/>
<dbReference type="Proteomes" id="UP000006548">
    <property type="component" value="Chromosome 5"/>
</dbReference>
<dbReference type="ExpressionAtlas" id="Q43873">
    <property type="expression patterns" value="baseline and differential"/>
</dbReference>
<dbReference type="GO" id="GO:0005576">
    <property type="term" value="C:extracellular region"/>
    <property type="evidence" value="ECO:0007669"/>
    <property type="project" value="UniProtKB-SubCell"/>
</dbReference>
<dbReference type="GO" id="GO:0020037">
    <property type="term" value="F:heme binding"/>
    <property type="evidence" value="ECO:0007669"/>
    <property type="project" value="InterPro"/>
</dbReference>
<dbReference type="GO" id="GO:0140825">
    <property type="term" value="F:lactoperoxidase activity"/>
    <property type="evidence" value="ECO:0007669"/>
    <property type="project" value="UniProtKB-EC"/>
</dbReference>
<dbReference type="GO" id="GO:0046872">
    <property type="term" value="F:metal ion binding"/>
    <property type="evidence" value="ECO:0007669"/>
    <property type="project" value="UniProtKB-KW"/>
</dbReference>
<dbReference type="GO" id="GO:0042744">
    <property type="term" value="P:hydrogen peroxide catabolic process"/>
    <property type="evidence" value="ECO:0007669"/>
    <property type="project" value="UniProtKB-KW"/>
</dbReference>
<dbReference type="GO" id="GO:0006979">
    <property type="term" value="P:response to oxidative stress"/>
    <property type="evidence" value="ECO:0007669"/>
    <property type="project" value="InterPro"/>
</dbReference>
<dbReference type="CDD" id="cd00693">
    <property type="entry name" value="secretory_peroxidase"/>
    <property type="match status" value="1"/>
</dbReference>
<dbReference type="FunFam" id="1.10.420.10:FF:000001">
    <property type="entry name" value="Peroxidase"/>
    <property type="match status" value="1"/>
</dbReference>
<dbReference type="FunFam" id="1.10.520.10:FF:000008">
    <property type="entry name" value="Peroxidase"/>
    <property type="match status" value="1"/>
</dbReference>
<dbReference type="Gene3D" id="1.10.520.10">
    <property type="match status" value="1"/>
</dbReference>
<dbReference type="Gene3D" id="1.10.420.10">
    <property type="entry name" value="Peroxidase, domain 2"/>
    <property type="match status" value="1"/>
</dbReference>
<dbReference type="InterPro" id="IPR002016">
    <property type="entry name" value="Haem_peroxidase"/>
</dbReference>
<dbReference type="InterPro" id="IPR010255">
    <property type="entry name" value="Haem_peroxidase_sf"/>
</dbReference>
<dbReference type="InterPro" id="IPR000823">
    <property type="entry name" value="Peroxidase_pln"/>
</dbReference>
<dbReference type="InterPro" id="IPR019793">
    <property type="entry name" value="Peroxidases_heam-ligand_BS"/>
</dbReference>
<dbReference type="InterPro" id="IPR033905">
    <property type="entry name" value="Secretory_peroxidase"/>
</dbReference>
<dbReference type="PANTHER" id="PTHR31517">
    <property type="match status" value="1"/>
</dbReference>
<dbReference type="PANTHER" id="PTHR31517:SF79">
    <property type="entry name" value="PEROXIDASE 35-RELATED"/>
    <property type="match status" value="1"/>
</dbReference>
<dbReference type="Pfam" id="PF00141">
    <property type="entry name" value="peroxidase"/>
    <property type="match status" value="1"/>
</dbReference>
<dbReference type="PRINTS" id="PR00458">
    <property type="entry name" value="PEROXIDASE"/>
</dbReference>
<dbReference type="PRINTS" id="PR00461">
    <property type="entry name" value="PLPEROXIDASE"/>
</dbReference>
<dbReference type="SUPFAM" id="SSF48113">
    <property type="entry name" value="Heme-dependent peroxidases"/>
    <property type="match status" value="1"/>
</dbReference>
<dbReference type="PROSITE" id="PS00435">
    <property type="entry name" value="PEROXIDASE_1"/>
    <property type="match status" value="1"/>
</dbReference>
<dbReference type="PROSITE" id="PS50873">
    <property type="entry name" value="PEROXIDASE_4"/>
    <property type="match status" value="1"/>
</dbReference>
<evidence type="ECO:0000255" key="1"/>
<evidence type="ECO:0000255" key="2">
    <source>
        <dbReference type="PROSITE-ProRule" id="PRU00297"/>
    </source>
</evidence>
<evidence type="ECO:0000269" key="3">
    <source>
    </source>
</evidence>
<protein>
    <recommendedName>
        <fullName>Peroxidase 73</fullName>
        <shortName>Atperox P73</shortName>
        <ecNumber>1.11.1.7</ecNumber>
    </recommendedName>
    <alternativeName>
        <fullName>ATP10a</fullName>
    </alternativeName>
    <alternativeName>
        <fullName>PRXR11</fullName>
    </alternativeName>
</protein>
<proteinExistence type="evidence at protein level"/>
<keyword id="KW-0106">Calcium</keyword>
<keyword id="KW-1015">Disulfide bond</keyword>
<keyword id="KW-0325">Glycoprotein</keyword>
<keyword id="KW-0349">Heme</keyword>
<keyword id="KW-0376">Hydrogen peroxide</keyword>
<keyword id="KW-0408">Iron</keyword>
<keyword id="KW-0479">Metal-binding</keyword>
<keyword id="KW-0560">Oxidoreductase</keyword>
<keyword id="KW-0575">Peroxidase</keyword>
<keyword id="KW-1185">Reference proteome</keyword>
<keyword id="KW-0964">Secreted</keyword>
<keyword id="KW-0732">Signal</keyword>
<feature type="signal peptide" evidence="1">
    <location>
        <begin position="1"/>
        <end position="25"/>
    </location>
</feature>
<feature type="chain" id="PRO_0000023738" description="Peroxidase 73">
    <location>
        <begin position="26"/>
        <end position="329"/>
    </location>
</feature>
<feature type="active site" description="Proton acceptor" evidence="2">
    <location>
        <position position="67"/>
    </location>
</feature>
<feature type="binding site" evidence="2">
    <location>
        <position position="68"/>
    </location>
    <ligand>
        <name>Ca(2+)</name>
        <dbReference type="ChEBI" id="CHEBI:29108"/>
        <label>1</label>
    </ligand>
</feature>
<feature type="binding site" evidence="2">
    <location>
        <position position="71"/>
    </location>
    <ligand>
        <name>Ca(2+)</name>
        <dbReference type="ChEBI" id="CHEBI:29108"/>
        <label>1</label>
    </ligand>
</feature>
<feature type="binding site" evidence="2">
    <location>
        <position position="73"/>
    </location>
    <ligand>
        <name>Ca(2+)</name>
        <dbReference type="ChEBI" id="CHEBI:29108"/>
        <label>1</label>
    </ligand>
</feature>
<feature type="binding site" evidence="2">
    <location>
        <position position="75"/>
    </location>
    <ligand>
        <name>Ca(2+)</name>
        <dbReference type="ChEBI" id="CHEBI:29108"/>
        <label>1</label>
    </ligand>
</feature>
<feature type="binding site" evidence="2">
    <location>
        <position position="77"/>
    </location>
    <ligand>
        <name>Ca(2+)</name>
        <dbReference type="ChEBI" id="CHEBI:29108"/>
        <label>1</label>
    </ligand>
</feature>
<feature type="binding site" evidence="2">
    <location>
        <position position="167"/>
    </location>
    <ligand>
        <name>substrate</name>
    </ligand>
</feature>
<feature type="binding site" description="axial binding residue" evidence="2">
    <location>
        <position position="197"/>
    </location>
    <ligand>
        <name>heme b</name>
        <dbReference type="ChEBI" id="CHEBI:60344"/>
    </ligand>
    <ligandPart>
        <name>Fe</name>
        <dbReference type="ChEBI" id="CHEBI:18248"/>
    </ligandPart>
</feature>
<feature type="binding site" evidence="2">
    <location>
        <position position="198"/>
    </location>
    <ligand>
        <name>Ca(2+)</name>
        <dbReference type="ChEBI" id="CHEBI:29108"/>
        <label>2</label>
    </ligand>
</feature>
<feature type="binding site" evidence="2">
    <location>
        <position position="249"/>
    </location>
    <ligand>
        <name>Ca(2+)</name>
        <dbReference type="ChEBI" id="CHEBI:29108"/>
        <label>2</label>
    </ligand>
</feature>
<feature type="binding site" evidence="2">
    <location>
        <position position="252"/>
    </location>
    <ligand>
        <name>Ca(2+)</name>
        <dbReference type="ChEBI" id="CHEBI:29108"/>
        <label>2</label>
    </ligand>
</feature>
<feature type="binding site" evidence="2">
    <location>
        <position position="257"/>
    </location>
    <ligand>
        <name>Ca(2+)</name>
        <dbReference type="ChEBI" id="CHEBI:29108"/>
        <label>2</label>
    </ligand>
</feature>
<feature type="site" description="Transition state stabilizer" evidence="2">
    <location>
        <position position="63"/>
    </location>
</feature>
<feature type="glycosylation site" description="N-linked (GlcNAc...) asparagine" evidence="1">
    <location>
        <position position="215"/>
    </location>
</feature>
<feature type="disulfide bond" evidence="2">
    <location>
        <begin position="36"/>
        <end position="119"/>
    </location>
</feature>
<feature type="disulfide bond" evidence="2">
    <location>
        <begin position="69"/>
        <end position="74"/>
    </location>
</feature>
<feature type="disulfide bond" evidence="2">
    <location>
        <begin position="125"/>
        <end position="325"/>
    </location>
</feature>
<feature type="disulfide bond" evidence="2">
    <location>
        <begin position="204"/>
        <end position="236"/>
    </location>
</feature>